<dbReference type="EMBL" id="DS028125">
    <property type="protein sequence ID" value="EEY69939.1"/>
    <property type="molecule type" value="Genomic_DNA"/>
</dbReference>
<dbReference type="RefSeq" id="XP_002998586.1">
    <property type="nucleotide sequence ID" value="XM_002998540.1"/>
</dbReference>
<dbReference type="SMR" id="D0N4Y1"/>
<dbReference type="STRING" id="403677.D0N4Y1"/>
<dbReference type="EnsemblProtists" id="PITG_06478T0">
    <property type="protein sequence ID" value="PITG_06478T0"/>
    <property type="gene ID" value="PITG_06478"/>
</dbReference>
<dbReference type="GeneID" id="9471688"/>
<dbReference type="KEGG" id="pif:PITG_06478"/>
<dbReference type="VEuPathDB" id="FungiDB:PITG_06478"/>
<dbReference type="eggNOG" id="ENOG502T14E">
    <property type="taxonomic scope" value="Eukaryota"/>
</dbReference>
<dbReference type="HOGENOM" id="CLU_044421_1_0_1"/>
<dbReference type="InParanoid" id="D0N4Y1"/>
<dbReference type="OMA" id="NEERWIG"/>
<dbReference type="OrthoDB" id="109324at2759"/>
<dbReference type="Proteomes" id="UP000006643">
    <property type="component" value="Partially assembled WGS sequence"/>
</dbReference>
<dbReference type="GO" id="GO:0005576">
    <property type="term" value="C:extracellular region"/>
    <property type="evidence" value="ECO:0007669"/>
    <property type="project" value="UniProtKB-SubCell"/>
</dbReference>
<dbReference type="GO" id="GO:0020002">
    <property type="term" value="C:host cell plasma membrane"/>
    <property type="evidence" value="ECO:0007669"/>
    <property type="project" value="UniProtKB-SubCell"/>
</dbReference>
<dbReference type="GO" id="GO:0016020">
    <property type="term" value="C:membrane"/>
    <property type="evidence" value="ECO:0007669"/>
    <property type="project" value="UniProtKB-KW"/>
</dbReference>
<dbReference type="InterPro" id="IPR054463">
    <property type="entry name" value="PexRD54_WY"/>
</dbReference>
<dbReference type="InterPro" id="IPR040786">
    <property type="entry name" value="RXLR_WY"/>
</dbReference>
<dbReference type="Pfam" id="PF22748">
    <property type="entry name" value="PexRD54_WY"/>
    <property type="match status" value="3"/>
</dbReference>
<dbReference type="Pfam" id="PF18634">
    <property type="entry name" value="RXLR_WY"/>
    <property type="match status" value="3"/>
</dbReference>
<keyword id="KW-1032">Host cell membrane</keyword>
<keyword id="KW-1043">Host membrane</keyword>
<keyword id="KW-0472">Membrane</keyword>
<keyword id="KW-1185">Reference proteome</keyword>
<keyword id="KW-0964">Secreted</keyword>
<keyword id="KW-0732">Signal</keyword>
<keyword id="KW-0843">Virulence</keyword>
<organism>
    <name type="scientific">Phytophthora infestans (strain T30-4)</name>
    <name type="common">Potato late blight agent</name>
    <dbReference type="NCBI Taxonomy" id="403677"/>
    <lineage>
        <taxon>Eukaryota</taxon>
        <taxon>Sar</taxon>
        <taxon>Stramenopiles</taxon>
        <taxon>Oomycota</taxon>
        <taxon>Peronosporales</taxon>
        <taxon>Peronosporaceae</taxon>
        <taxon>Phytophthora</taxon>
    </lineage>
</organism>
<evidence type="ECO:0000255" key="1"/>
<evidence type="ECO:0000269" key="2">
    <source>
    </source>
</evidence>
<evidence type="ECO:0000269" key="3">
    <source>
    </source>
</evidence>
<evidence type="ECO:0000269" key="4">
    <source>
    </source>
</evidence>
<evidence type="ECO:0000269" key="5">
    <source>
    </source>
</evidence>
<evidence type="ECO:0000269" key="6">
    <source>
    </source>
</evidence>
<evidence type="ECO:0000269" key="7">
    <source>
    </source>
</evidence>
<evidence type="ECO:0000303" key="8">
    <source>
    </source>
</evidence>
<evidence type="ECO:0000305" key="9"/>
<evidence type="ECO:0000305" key="10">
    <source>
    </source>
</evidence>
<accession>D0N4Y1</accession>
<sequence>MSHQRILLLLMAAFFAWVSAQTPPGQADKSKLIAHDVLMKTTSLSETTIATSSKRFLRLYDAEVRDTVRGDNDVDREERGTTPLLSKVDDLIHKVFKSNPEQAQIKAWMKSRVHPQAIFDTLRLAKSTTKLNDDPNLLLWLKLVAAFRAKNGNQAFSDLDLYYLLLKRSSGEELKILIESFRKTGALKELGKSMQKSLSGSWVSKTLQHETDPKIVYDTLRLQEAGTKLVDSPIFHQWLAYAQQYRAQKGNHWFGDDDMLDLFRKTMPEKDVVTLLHLLRNVPGMKDHGDTMQRFLFLSSKTSRKMMHDVWLNYDVTPEQVFKILRLVKVNMDAVDTNAMFIHWLRYVNLYRSHTKKNVLSSVQMVHFLADTKPLRSEWQFATFFESLKDVPDLKRLAENMQTYLFQNWLHTEWDPKAVSSMLAIPFPTSAVYLPKNDPIYKTWVAYTLYYTERKGGVSLLNKVKTLLDNDNPIGALTAAMKAQ</sequence>
<comment type="function">
    <text evidence="7">Effector that enhances P.infestans colonization of Nicotiana benthamiana leaves.</text>
</comment>
<comment type="subcellular location">
    <subcellularLocation>
        <location evidence="7">Secreted</location>
    </subcellularLocation>
    <subcellularLocation>
        <location evidence="7">Host cell membrane</location>
    </subcellularLocation>
</comment>
<comment type="induction">
    <text evidence="2 3 4 5 6">Expression is induced during host plant infection.</text>
</comment>
<comment type="domain">
    <text evidence="10">The RxLR-dEER motif acts to carry the protein into the host cell cytoplasm through binding to cell surface phosphatidylinositol-3-phosphate.</text>
</comment>
<comment type="similarity">
    <text evidence="9">Belongs to the RxLR effector family.</text>
</comment>
<name>RD18_PHYIT</name>
<proteinExistence type="evidence at transcript level"/>
<gene>
    <name evidence="8" type="primary">PexRD18</name>
    <name type="ORF">PITG_06478</name>
</gene>
<protein>
    <recommendedName>
        <fullName evidence="8">RxLR effector protein PexRD18</fullName>
    </recommendedName>
</protein>
<reference key="1">
    <citation type="journal article" date="2009" name="Nature">
        <title>Genome sequence and analysis of the Irish potato famine pathogen Phytophthora infestans.</title>
        <authorList>
            <consortium name="The Broad Institute Genome Sequencing Platform"/>
            <person name="Haas B.J."/>
            <person name="Kamoun S."/>
            <person name="Zody M.C."/>
            <person name="Jiang R.H."/>
            <person name="Handsaker R.E."/>
            <person name="Cano L.M."/>
            <person name="Grabherr M."/>
            <person name="Kodira C.D."/>
            <person name="Raffaele S."/>
            <person name="Torto-Alalibo T."/>
            <person name="Bozkurt T.O."/>
            <person name="Ah-Fong A.M."/>
            <person name="Alvarado L."/>
            <person name="Anderson V.L."/>
            <person name="Armstrong M.R."/>
            <person name="Avrova A."/>
            <person name="Baxter L."/>
            <person name="Beynon J."/>
            <person name="Boevink P.C."/>
            <person name="Bollmann S.R."/>
            <person name="Bos J.I."/>
            <person name="Bulone V."/>
            <person name="Cai G."/>
            <person name="Cakir C."/>
            <person name="Carrington J.C."/>
            <person name="Chawner M."/>
            <person name="Conti L."/>
            <person name="Costanzo S."/>
            <person name="Ewan R."/>
            <person name="Fahlgren N."/>
            <person name="Fischbach M.A."/>
            <person name="Fugelstad J."/>
            <person name="Gilroy E.M."/>
            <person name="Gnerre S."/>
            <person name="Green P.J."/>
            <person name="Grenville-Briggs L.J."/>
            <person name="Griffith J."/>
            <person name="Grunwald N.J."/>
            <person name="Horn K."/>
            <person name="Horner N.R."/>
            <person name="Hu C.H."/>
            <person name="Huitema E."/>
            <person name="Jeong D.H."/>
            <person name="Jones A.M."/>
            <person name="Jones J.D."/>
            <person name="Jones R.W."/>
            <person name="Karlsson E.K."/>
            <person name="Kunjeti S.G."/>
            <person name="Lamour K."/>
            <person name="Liu Z."/>
            <person name="Ma L."/>
            <person name="Maclean D."/>
            <person name="Chibucos M.C."/>
            <person name="McDonald H."/>
            <person name="McWalters J."/>
            <person name="Meijer H.J."/>
            <person name="Morgan W."/>
            <person name="Morris P.F."/>
            <person name="Munro C.A."/>
            <person name="O'Neill K."/>
            <person name="Ospina-Giraldo M."/>
            <person name="Pinzon A."/>
            <person name="Pritchard L."/>
            <person name="Ramsahoye B."/>
            <person name="Ren Q."/>
            <person name="Restrepo S."/>
            <person name="Roy S."/>
            <person name="Sadanandom A."/>
            <person name="Savidor A."/>
            <person name="Schornack S."/>
            <person name="Schwartz D.C."/>
            <person name="Schumann U.D."/>
            <person name="Schwessinger B."/>
            <person name="Seyer L."/>
            <person name="Sharpe T."/>
            <person name="Silvar C."/>
            <person name="Song J."/>
            <person name="Studholme D.J."/>
            <person name="Sykes S."/>
            <person name="Thines M."/>
            <person name="van de Vondervoort P.J."/>
            <person name="Phuntumart V."/>
            <person name="Wawra S."/>
            <person name="Weide R."/>
            <person name="Win J."/>
            <person name="Young C."/>
            <person name="Zhou S."/>
            <person name="Fry W."/>
            <person name="Meyers B.C."/>
            <person name="van West P."/>
            <person name="Ristaino J."/>
            <person name="Govers F."/>
            <person name="Birch P.R."/>
            <person name="Whisson S.C."/>
            <person name="Judelson H.S."/>
            <person name="Nusbaum C."/>
        </authorList>
    </citation>
    <scope>NUCLEOTIDE SEQUENCE [LARGE SCALE GENOMIC DNA]</scope>
    <scope>INDUCTION</scope>
    <source>
        <strain>T30-4</strain>
    </source>
</reference>
<reference key="2">
    <citation type="journal article" date="2007" name="Nature">
        <title>A translocation signal for delivery of oomycete effector proteins into host plant cells.</title>
        <authorList>
            <person name="Whisson S.C."/>
            <person name="Boevink P.C."/>
            <person name="Moleleki L."/>
            <person name="Avrova A.O."/>
            <person name="Morales J.G."/>
            <person name="Gilroy E.M."/>
            <person name="Armstrong M.R."/>
            <person name="Grouffaud S."/>
            <person name="van West P."/>
            <person name="Chapman S."/>
            <person name="Hein I."/>
            <person name="Toth I.K."/>
            <person name="Pritchard L."/>
            <person name="Birch P.R."/>
        </authorList>
    </citation>
    <scope>INDUCTION</scope>
    <scope>DOMAIN</scope>
</reference>
<reference key="3">
    <citation type="journal article" date="2009" name="Plant Cell">
        <title>In planta expression screens of Phytophthora infestans RXLR effectors reveal diverse phenotypes, including activation of the Solanum bulbocastanum disease resistance protein Rpi-blb2.</title>
        <authorList>
            <person name="Oh S.K."/>
            <person name="Young C."/>
            <person name="Lee M."/>
            <person name="Oliva R."/>
            <person name="Bozkurt T.O."/>
            <person name="Cano L.M."/>
            <person name="Win J."/>
            <person name="Bos J.I."/>
            <person name="Liu H.Y."/>
            <person name="van Damme M."/>
            <person name="Morgan W."/>
            <person name="Choi D."/>
            <person name="Van der Vossen E.A."/>
            <person name="Vleeshouwers V.G."/>
            <person name="Kamoun S."/>
        </authorList>
    </citation>
    <scope>INDUCTION</scope>
</reference>
<reference key="4">
    <citation type="journal article" date="2017" name="BMC Genomics">
        <title>RNA-seq of life stages of the oomycete Phytophthora infestans reveals dynamic changes in metabolic, signal transduction, and pathogenesis genes and a major role for calcium signaling in development.</title>
        <authorList>
            <person name="Ah-Fong A.M."/>
            <person name="Kim K.S."/>
            <person name="Judelson H.S."/>
        </authorList>
    </citation>
    <scope>INDUCTION</scope>
</reference>
<reference key="5">
    <citation type="journal article" date="2017" name="Front. Plant Sci.">
        <title>Conserved RXLR effector genes of Phytophthora infestans expressed at the early stage of potato infection are suppressive to host defense.</title>
        <authorList>
            <person name="Yin J."/>
            <person name="Gu B."/>
            <person name="Huang G."/>
            <person name="Tian Y."/>
            <person name="Quan J."/>
            <person name="Lindqvist-Kreuze H."/>
            <person name="Shan W."/>
        </authorList>
    </citation>
    <scope>INDUCTION</scope>
</reference>
<reference key="6">
    <citation type="journal article" date="2019" name="J. Exp. Bot.">
        <title>Phytophthora infestans RXLR effectors act in concert at diverse subcellular locations to enhance host colonization.</title>
        <authorList>
            <person name="Wang S."/>
            <person name="McLellan H."/>
            <person name="Bukharova T."/>
            <person name="He Q."/>
            <person name="Murphy F."/>
            <person name="Shi J."/>
            <person name="Sun S."/>
            <person name="van Weymers P."/>
            <person name="Ren Y."/>
            <person name="Thilliez G."/>
            <person name="Wang H."/>
            <person name="Chen X."/>
            <person name="Engelhardt S."/>
            <person name="Vleeshouwers V."/>
            <person name="Gilroy E.M."/>
            <person name="Whisson S.C."/>
            <person name="Hein I."/>
            <person name="Wang X."/>
            <person name="Tian Z."/>
            <person name="Birch P.R.J."/>
            <person name="Boevink P.C."/>
        </authorList>
    </citation>
    <scope>FUNCTION</scope>
    <scope>SUBCELLULAR LOCATION</scope>
</reference>
<feature type="signal peptide" evidence="1">
    <location>
        <begin position="1"/>
        <end position="20"/>
    </location>
</feature>
<feature type="chain" id="PRO_5003012955" description="RxLR effector protein PexRD18">
    <location>
        <begin position="21"/>
        <end position="484"/>
    </location>
</feature>
<feature type="short sequence motif" description="RxLR-dEER" evidence="10">
    <location>
        <begin position="55"/>
        <end position="79"/>
    </location>
</feature>